<evidence type="ECO:0000250" key="1">
    <source>
        <dbReference type="UniProtKB" id="Q3ULW8"/>
    </source>
</evidence>
<evidence type="ECO:0000255" key="2"/>
<evidence type="ECO:0000255" key="3">
    <source>
        <dbReference type="PROSITE-ProRule" id="PRU00397"/>
    </source>
</evidence>
<evidence type="ECO:0000255" key="4">
    <source>
        <dbReference type="PROSITE-ProRule" id="PRU00398"/>
    </source>
</evidence>
<evidence type="ECO:0000255" key="5">
    <source>
        <dbReference type="PROSITE-ProRule" id="PRU01321"/>
    </source>
</evidence>
<evidence type="ECO:0000256" key="6">
    <source>
        <dbReference type="SAM" id="MobiDB-lite"/>
    </source>
</evidence>
<evidence type="ECO:0000269" key="7">
    <source>
    </source>
</evidence>
<evidence type="ECO:0000269" key="8">
    <source>
    </source>
</evidence>
<evidence type="ECO:0000269" key="9">
    <source>
    </source>
</evidence>
<evidence type="ECO:0000269" key="10">
    <source>
    </source>
</evidence>
<evidence type="ECO:0000269" key="11">
    <source>
    </source>
</evidence>
<evidence type="ECO:0000269" key="12">
    <source>
    </source>
</evidence>
<evidence type="ECO:0000269" key="13">
    <source>
    </source>
</evidence>
<evidence type="ECO:0000269" key="14">
    <source>
    </source>
</evidence>
<evidence type="ECO:0000269" key="15">
    <source>
    </source>
</evidence>
<evidence type="ECO:0000269" key="16">
    <source>
    </source>
</evidence>
<evidence type="ECO:0000269" key="17">
    <source>
    </source>
</evidence>
<evidence type="ECO:0000269" key="18">
    <source>
    </source>
</evidence>
<evidence type="ECO:0000269" key="19">
    <source>
    </source>
</evidence>
<evidence type="ECO:0000303" key="20">
    <source>
    </source>
</evidence>
<evidence type="ECO:0000303" key="21">
    <source>
    </source>
</evidence>
<evidence type="ECO:0000303" key="22">
    <source>
    </source>
</evidence>
<evidence type="ECO:0000303" key="23">
    <source ref="3"/>
</evidence>
<evidence type="ECO:0000305" key="24"/>
<evidence type="ECO:0000312" key="25">
    <source>
        <dbReference type="HGNC" id="HGNC:273"/>
    </source>
</evidence>
<evidence type="ECO:0007744" key="26">
    <source>
        <dbReference type="PDB" id="3C49"/>
    </source>
</evidence>
<evidence type="ECO:0007744" key="27">
    <source>
        <dbReference type="PDB" id="3C4H"/>
    </source>
</evidence>
<evidence type="ECO:0007744" key="28">
    <source>
        <dbReference type="PDB" id="3CE0"/>
    </source>
</evidence>
<evidence type="ECO:0007744" key="29">
    <source>
        <dbReference type="PDB" id="3FHB"/>
    </source>
</evidence>
<evidence type="ECO:0007744" key="30">
    <source>
        <dbReference type="PDB" id="4GV0"/>
    </source>
</evidence>
<evidence type="ECO:0007744" key="31">
    <source>
        <dbReference type="PDB" id="4GV2"/>
    </source>
</evidence>
<evidence type="ECO:0007744" key="32">
    <source>
        <dbReference type="PDB" id="4GV4"/>
    </source>
</evidence>
<evidence type="ECO:0007744" key="33">
    <source>
        <dbReference type="PDB" id="4L6Z"/>
    </source>
</evidence>
<evidence type="ECO:0007744" key="34">
    <source>
        <dbReference type="PDB" id="4L70"/>
    </source>
</evidence>
<evidence type="ECO:0007744" key="35">
    <source>
        <dbReference type="PDB" id="4L7L"/>
    </source>
</evidence>
<evidence type="ECO:0007744" key="36">
    <source>
        <dbReference type="PDB" id="4L7N"/>
    </source>
</evidence>
<evidence type="ECO:0007744" key="37">
    <source>
        <dbReference type="PDB" id="4L7O"/>
    </source>
</evidence>
<evidence type="ECO:0007744" key="38">
    <source>
        <dbReference type="PDB" id="4L7P"/>
    </source>
</evidence>
<evidence type="ECO:0007744" key="39">
    <source>
        <dbReference type="PDB" id="4L7R"/>
    </source>
</evidence>
<evidence type="ECO:0007744" key="40">
    <source>
        <dbReference type="PDB" id="4L7U"/>
    </source>
</evidence>
<evidence type="ECO:0007829" key="41">
    <source>
        <dbReference type="PDB" id="2EOC"/>
    </source>
</evidence>
<evidence type="ECO:0007829" key="42">
    <source>
        <dbReference type="PDB" id="3C49"/>
    </source>
</evidence>
<evidence type="ECO:0007829" key="43">
    <source>
        <dbReference type="PDB" id="4GV2"/>
    </source>
</evidence>
<sequence>MAPKPKPWVQTEGPEKKKGRQAGREEDPFRSTAEALKAIPAEKRIIRVDPTCPLSSNPGTQVYEDYNCTLNQTNIENNNNKFYIIQLLQDSNRFFTCWNRWGRVGEVGQSKINHFTRLEDAKKDFEKKFREKTKNNWAERDHFVSHPGKYTLIEVQAEDEAQEAVVKVDRGPVRTVTKRVQPCSLDPATQKLITNIFSKEMFKNTMALMDLDVKKMPLGKLSKQQIARGFEALEALEEALKGPTDGGQSLEELSSHFYTVIPHNFGHSQPPPINSPELLQAKKDMLLVLADIELAQALQAVSEQEKTVEEVPHPLDRDYQLLKCQLQLLDSGAPEYKVIQTYLEQTGSNHRCPTLQHIWKVNQEGEEDRFQAHSKLGNRKLLWHGTNMAVVAAILTSGLRIMPHSGGRVGKGIYFASENSKSAGYVIGMKCGAHHVGYMFLGEVALGREHHINTDNPSLKSPPPGFDSVIARGHTEPDPTQDTELELDGQQVVVPQGQPVPCPEFSSSTFSQSEYLIYQESQCRLRYLLEVHL</sequence>
<reference key="1">
    <citation type="journal article" date="1999" name="Genomics">
        <title>A human poly(ADP-ribose) polymerase gene family (ADPRTL): cDNA cloning of two novel poly(ADP-ribose) polymerase homologues.</title>
        <authorList>
            <person name="Johansson M."/>
        </authorList>
    </citation>
    <scope>NUCLEOTIDE SEQUENCE [MRNA] (ISOFORM 1)</scope>
    <scope>TISSUE SPECIFICITY</scope>
    <source>
        <tissue>Fetal brain</tissue>
    </source>
</reference>
<reference key="2">
    <citation type="journal article" date="2003" name="J. Cell Sci.">
        <title>PARP-3 localizes preferentially to the daughter centriole and interferes with the G1/S cell cycle progression.</title>
        <authorList>
            <person name="Augustin A."/>
            <person name="Spenlehauer C."/>
            <person name="Dumond H."/>
            <person name="Menissier-de Murcia J."/>
            <person name="Piel M."/>
            <person name="Schmit A.-C."/>
            <person name="Apiou F."/>
            <person name="Vonesch J.-L."/>
            <person name="Kock M."/>
            <person name="Bornens M."/>
            <person name="de Murcia G.M."/>
        </authorList>
    </citation>
    <scope>NUCLEOTIDE SEQUENCE [MRNA] (ISOFORM 2)</scope>
    <scope>SUBCELLULAR LOCATION</scope>
    <source>
        <tissue>Frontal cortex</tissue>
    </source>
</reference>
<reference key="3">
    <citation type="submission" date="1998-03" db="EMBL/GenBank/DDBJ databases">
        <authorList>
            <person name="Koch-Nolte F."/>
        </authorList>
    </citation>
    <scope>NUCLEOTIDE SEQUENCE [MRNA] (ISOFORM 2)</scope>
</reference>
<reference key="4">
    <citation type="journal article" date="2006" name="Nature">
        <title>The DNA sequence, annotation and analysis of human chromosome 3.</title>
        <authorList>
            <person name="Muzny D.M."/>
            <person name="Scherer S.E."/>
            <person name="Kaul R."/>
            <person name="Wang J."/>
            <person name="Yu J."/>
            <person name="Sudbrak R."/>
            <person name="Buhay C.J."/>
            <person name="Chen R."/>
            <person name="Cree A."/>
            <person name="Ding Y."/>
            <person name="Dugan-Rocha S."/>
            <person name="Gill R."/>
            <person name="Gunaratne P."/>
            <person name="Harris R.A."/>
            <person name="Hawes A.C."/>
            <person name="Hernandez J."/>
            <person name="Hodgson A.V."/>
            <person name="Hume J."/>
            <person name="Jackson A."/>
            <person name="Khan Z.M."/>
            <person name="Kovar-Smith C."/>
            <person name="Lewis L.R."/>
            <person name="Lozado R.J."/>
            <person name="Metzker M.L."/>
            <person name="Milosavljevic A."/>
            <person name="Miner G.R."/>
            <person name="Morgan M.B."/>
            <person name="Nazareth L.V."/>
            <person name="Scott G."/>
            <person name="Sodergren E."/>
            <person name="Song X.-Z."/>
            <person name="Steffen D."/>
            <person name="Wei S."/>
            <person name="Wheeler D.A."/>
            <person name="Wright M.W."/>
            <person name="Worley K.C."/>
            <person name="Yuan Y."/>
            <person name="Zhang Z."/>
            <person name="Adams C.Q."/>
            <person name="Ansari-Lari M.A."/>
            <person name="Ayele M."/>
            <person name="Brown M.J."/>
            <person name="Chen G."/>
            <person name="Chen Z."/>
            <person name="Clendenning J."/>
            <person name="Clerc-Blankenburg K.P."/>
            <person name="Chen R."/>
            <person name="Chen Z."/>
            <person name="Davis C."/>
            <person name="Delgado O."/>
            <person name="Dinh H.H."/>
            <person name="Dong W."/>
            <person name="Draper H."/>
            <person name="Ernst S."/>
            <person name="Fu G."/>
            <person name="Gonzalez-Garay M.L."/>
            <person name="Garcia D.K."/>
            <person name="Gillett W."/>
            <person name="Gu J."/>
            <person name="Hao B."/>
            <person name="Haugen E."/>
            <person name="Havlak P."/>
            <person name="He X."/>
            <person name="Hennig S."/>
            <person name="Hu S."/>
            <person name="Huang W."/>
            <person name="Jackson L.R."/>
            <person name="Jacob L.S."/>
            <person name="Kelly S.H."/>
            <person name="Kube M."/>
            <person name="Levy R."/>
            <person name="Li Z."/>
            <person name="Liu B."/>
            <person name="Liu J."/>
            <person name="Liu W."/>
            <person name="Lu J."/>
            <person name="Maheshwari M."/>
            <person name="Nguyen B.-V."/>
            <person name="Okwuonu G.O."/>
            <person name="Palmeiri A."/>
            <person name="Pasternak S."/>
            <person name="Perez L.M."/>
            <person name="Phelps K.A."/>
            <person name="Plopper F.J."/>
            <person name="Qiang B."/>
            <person name="Raymond C."/>
            <person name="Rodriguez R."/>
            <person name="Saenphimmachak C."/>
            <person name="Santibanez J."/>
            <person name="Shen H."/>
            <person name="Shen Y."/>
            <person name="Subramanian S."/>
            <person name="Tabor P.E."/>
            <person name="Verduzco D."/>
            <person name="Waldron L."/>
            <person name="Wang J."/>
            <person name="Wang J."/>
            <person name="Wang Q."/>
            <person name="Williams G.A."/>
            <person name="Wong G.K.-S."/>
            <person name="Yao Z."/>
            <person name="Zhang J."/>
            <person name="Zhang X."/>
            <person name="Zhao G."/>
            <person name="Zhou J."/>
            <person name="Zhou Y."/>
            <person name="Nelson D."/>
            <person name="Lehrach H."/>
            <person name="Reinhardt R."/>
            <person name="Naylor S.L."/>
            <person name="Yang H."/>
            <person name="Olson M."/>
            <person name="Weinstock G."/>
            <person name="Gibbs R.A."/>
        </authorList>
    </citation>
    <scope>NUCLEOTIDE SEQUENCE [LARGE SCALE GENOMIC DNA]</scope>
</reference>
<reference key="5">
    <citation type="journal article" date="2004" name="Genome Res.">
        <title>The status, quality, and expansion of the NIH full-length cDNA project: the Mammalian Gene Collection (MGC).</title>
        <authorList>
            <consortium name="The MGC Project Team"/>
        </authorList>
    </citation>
    <scope>NUCLEOTIDE SEQUENCE [LARGE SCALE MRNA] (ISOFORM 1)</scope>
    <source>
        <tissue>B-cell</tissue>
    </source>
</reference>
<reference key="6">
    <citation type="journal article" date="2007" name="BMC Genomics">
        <title>The full-ORF clone resource of the German cDNA consortium.</title>
        <authorList>
            <person name="Bechtel S."/>
            <person name="Rosenfelder H."/>
            <person name="Duda A."/>
            <person name="Schmidt C.P."/>
            <person name="Ernst U."/>
            <person name="Wellenreuther R."/>
            <person name="Mehrle A."/>
            <person name="Schuster C."/>
            <person name="Bahr A."/>
            <person name="Bloecker H."/>
            <person name="Heubner D."/>
            <person name="Hoerlein A."/>
            <person name="Michel G."/>
            <person name="Wedler H."/>
            <person name="Koehrer K."/>
            <person name="Ottenwaelder B."/>
            <person name="Poustka A."/>
            <person name="Wiemann S."/>
            <person name="Schupp I."/>
        </authorList>
    </citation>
    <scope>NUCLEOTIDE SEQUENCE [LARGE SCALE MRNA] OF 75-533 (ISOFORM 1)</scope>
    <source>
        <tissue>Kidney</tissue>
    </source>
</reference>
<reference key="7">
    <citation type="journal article" date="2007" name="J. Cell. Biochem.">
        <title>PARP-3 associates with polycomb group bodies and with components of the DNA damage repair machinery.</title>
        <authorList>
            <person name="Rouleau M."/>
            <person name="McDonald D."/>
            <person name="Gagne P."/>
            <person name="Ouellet M.E."/>
            <person name="Droit A."/>
            <person name="Hunter J.M."/>
            <person name="Dutertre S."/>
            <person name="Prigent C."/>
            <person name="Hendzel M.J."/>
            <person name="Poirier G.G."/>
        </authorList>
    </citation>
    <scope>FUNCTION</scope>
    <scope>SUBCELLULAR LOCATION</scope>
    <scope>INTERACTION WITH PRKDC; PARP1; EZH2; XRCC5; XRCC6; HDAC1; HDAC2; SUZ12; YY1; LRIG3 AND LIG4</scope>
</reference>
<reference key="8">
    <citation type="journal article" date="2010" name="Trends Biochem. Sci.">
        <title>Toward a unified nomenclature for mammalian ADP-ribosyltransferases.</title>
        <authorList>
            <person name="Hottiger M.O."/>
            <person name="Hassa P.O."/>
            <person name="Luscher B."/>
            <person name="Schuler H."/>
            <person name="Koch-Nolte F."/>
        </authorList>
    </citation>
    <scope>NOMENCLATURE</scope>
</reference>
<reference key="9">
    <citation type="journal article" date="2010" name="J. Biol. Chem.">
        <title>PARP-3 is a mono-ADP-ribosylase that activates PARP-1 in the absence of DNA.</title>
        <authorList>
            <person name="Loseva O."/>
            <person name="Jemth A.S."/>
            <person name="Bryant H.E."/>
            <person name="Schueler H."/>
            <person name="Lehtioe L."/>
            <person name="Karlberg T."/>
            <person name="Helleday T."/>
        </authorList>
    </citation>
    <scope>FUNCTION</scope>
    <scope>CATALYTIC ACTIVITY</scope>
    <scope>BIOPHYSICOCHEMICAL PROPERTIES</scope>
    <scope>INTERACTION WITH PARP1</scope>
    <scope>AUTO-ADP-RIBOSYLATION</scope>
</reference>
<reference key="10">
    <citation type="journal article" date="2011" name="Mol. Cell">
        <title>PARP-3 and APLF function together to accelerate nonhomologous end-joining.</title>
        <authorList>
            <person name="Rulten S.L."/>
            <person name="Fisher A.E."/>
            <person name="Robert I."/>
            <person name="Zuma M.C."/>
            <person name="Rouleau M."/>
            <person name="Ju L."/>
            <person name="Poirier G."/>
            <person name="Reina-San-Martin B."/>
            <person name="Caldecott K.W."/>
        </authorList>
    </citation>
    <scope>FUNCTION</scope>
</reference>
<reference key="11">
    <citation type="journal article" date="2011" name="Proc. Natl. Acad. Sci. U.S.A.">
        <title>Poly(ADP-ribose) polymerase 3 (PARP3), a newcomer in cellular response to DNA damage and mitotic progression.</title>
        <authorList>
            <person name="Boehler C."/>
            <person name="Gauthier L.R."/>
            <person name="Mortusewicz O."/>
            <person name="Biard D.S."/>
            <person name="Saliou J.M."/>
            <person name="Bresson A."/>
            <person name="Sanglier-Cianferani S."/>
            <person name="Smith S."/>
            <person name="Schreiber V."/>
            <person name="Boussin F."/>
            <person name="Dantzer F."/>
        </authorList>
    </citation>
    <scope>FUNCTION</scope>
    <scope>SUBCELLULAR LOCATION</scope>
</reference>
<reference key="12">
    <citation type="journal article" date="2014" name="Nat. Commun.">
        <title>Family-wide analysis of poly(ADP-ribose) polymerase activity.</title>
        <authorList>
            <person name="Vyas S."/>
            <person name="Matic I."/>
            <person name="Uchima L."/>
            <person name="Rood J."/>
            <person name="Zaja R."/>
            <person name="Hay R.T."/>
            <person name="Ahel I."/>
            <person name="Chang P."/>
        </authorList>
    </citation>
    <scope>FUNCTION</scope>
    <scope>CATALYTIC ACTIVITY</scope>
    <scope>ADP-RIBOSYLATION AT LYS-6; GLU-12; GLU-15; GLU-26; GLU-34; LYS-37; ASP-141; GLU-163; ASP-210; GLU-231; GLU-309; GLU-310; GLU-344 AND GLU-449</scope>
</reference>
<reference key="13">
    <citation type="journal article" date="2014" name="Nucleic Acids Res.">
        <title>PARP3 affects the relative contribution of homologous recombination and nonhomologous end-joining pathways.</title>
        <authorList>
            <person name="Beck C."/>
            <person name="Boehler C."/>
            <person name="Guirouilh Barbat J."/>
            <person name="Bonnet M.E."/>
            <person name="Illuzzi G."/>
            <person name="Ronde P."/>
            <person name="Gauthier L.R."/>
            <person name="Magroun N."/>
            <person name="Rajendran A."/>
            <person name="Lopez B.S."/>
            <person name="Scully R."/>
            <person name="Boussin F.D."/>
            <person name="Schreiber V."/>
            <person name="Dantzer F."/>
        </authorList>
    </citation>
    <scope>FUNCTION</scope>
    <scope>INTERACTION WITH XRCC5 AND XRCC6</scope>
</reference>
<reference key="14">
    <citation type="journal article" date="2016" name="Nat. Commun.">
        <title>PARP3 is a sensor of nicked nucleosomes and monoribosylates histone H2B(Glu2).</title>
        <authorList>
            <person name="Grundy G.J."/>
            <person name="Polo L.M."/>
            <person name="Zeng Z."/>
            <person name="Rulten S.L."/>
            <person name="Hoch N.C."/>
            <person name="Paomephan P."/>
            <person name="Xu Y."/>
            <person name="Sweet S.M."/>
            <person name="Thorne A.W."/>
            <person name="Oliver A.W."/>
            <person name="Matthews S.J."/>
            <person name="Pearl L.H."/>
            <person name="Caldecott K.W."/>
        </authorList>
    </citation>
    <scope>FUNCTION</scope>
    <scope>SUBCELLULAR LOCATION</scope>
    <scope>CATALYTIC ACTIVITY</scope>
    <scope>MUTAGENESIS OF TYR-83; TRP-101 AND ARG-103</scope>
</reference>
<reference key="15">
    <citation type="journal article" date="2017" name="Nat. Commun.">
        <title>PARP3 is a promoter of chromosomal rearrangements and limits G4 DNA.</title>
        <authorList>
            <person name="Day T.A."/>
            <person name="Layer J.V."/>
            <person name="Cleary J.P."/>
            <person name="Guha S."/>
            <person name="Stevenson K.E."/>
            <person name="Tivey T."/>
            <person name="Kim S."/>
            <person name="Schinzel A.C."/>
            <person name="Izzo F."/>
            <person name="Doench J."/>
            <person name="Root D.E."/>
            <person name="Hahn W.C."/>
            <person name="Price B.D."/>
            <person name="Weinstock D.M."/>
        </authorList>
    </citation>
    <scope>FUNCTION</scope>
    <scope>SUBCELLULAR LOCATION</scope>
</reference>
<reference key="16">
    <citation type="journal article" date="2018" name="Nucleic Acids Res.">
        <title>Characterization of DNA ADP-ribosyltransferase activities of PARP2 and PARP3: new insights into DNA ADP-ribosylation.</title>
        <authorList>
            <person name="Zarkovic G."/>
            <person name="Belousova E.A."/>
            <person name="Talhaoui I."/>
            <person name="Saint-Pierre C."/>
            <person name="Kutuzov M.M."/>
            <person name="Matkarimov B.T."/>
            <person name="Biard D."/>
            <person name="Gasparutto D."/>
            <person name="Lavrik O.I."/>
            <person name="Ishchenko A.A."/>
        </authorList>
    </citation>
    <scope>FUNCTION</scope>
    <scope>CATALYTIC ACTIVITY</scope>
</reference>
<reference key="17">
    <citation type="journal article" date="2018" name="Sci. Rep.">
        <title>Dna is a new target of Parp3.</title>
        <authorList>
            <person name="Belousova E.A."/>
            <person name="Ishchenko A.A."/>
            <person name="Lavrik O.I."/>
        </authorList>
    </citation>
    <scope>FUNCTION</scope>
</reference>
<reference key="18">
    <citation type="submission" date="2007-04" db="PDB data bank">
        <title>Human poly(ADP-ribose) polymerase 3, catalytic fragment in complex with an inhibitor 3-aminobenzoic acid.</title>
        <authorList>
            <consortium name="Structural genomics consortium (SGC)"/>
        </authorList>
    </citation>
    <scope>X-RAY CRYSTALLOGRAPHY (2.3 ANGSTROMS) OF 178-532 IN COMPLEX WITH THE INHIBITOR 3-AMINOBENZOIC ACID</scope>
</reference>
<reference key="19">
    <citation type="submission" date="2008-04" db="PDB data bank">
        <title>Solution structure of the WGR domain from human poly [ADP-ribose] polymerase-3.</title>
        <authorList>
            <consortium name="RIKEN structural genomics initiative (RSGI)"/>
        </authorList>
    </citation>
    <scope>STRUCTURE BY NMR OF 41-157</scope>
</reference>
<reference evidence="26 27 28 29" key="20">
    <citation type="journal article" date="2009" name="J. Med. Chem.">
        <title>Structural basis for inhibitor specificity in human poly(ADP-ribose) polymerase-3.</title>
        <authorList>
            <person name="Lehtioe L."/>
            <person name="Jemth A.S."/>
            <person name="Collins R."/>
            <person name="Loseva O."/>
            <person name="Johansson A."/>
            <person name="Markova N."/>
            <person name="Hammarstroem M."/>
            <person name="Flores A."/>
            <person name="Holmberg-Schiavone L."/>
            <person name="Weigelt J."/>
            <person name="Helleday T."/>
            <person name="Schueler H."/>
            <person name="Karlberg T."/>
        </authorList>
    </citation>
    <scope>X-RAY CRYSTALLOGRAPHY (2.10 ANGSTROMS) OF 178-532 IN COMPLEX WITH DR2313; KU0058948 AND PJ34 INHIBITORS</scope>
    <scope>FUNCTION</scope>
    <scope>ACTIVITY REGULATION</scope>
</reference>
<reference evidence="30 31 32" key="21">
    <citation type="journal article" date="2013" name="ACS Chem. Biol.">
        <title>PARP inhibitor with selectivity toward ADP-ribosyltransferase ARTD3/PARP3.</title>
        <authorList>
            <person name="Lindgren A.E."/>
            <person name="Karlberg T."/>
            <person name="Thorsell A.G."/>
            <person name="Hesse M."/>
            <person name="Spjut S."/>
            <person name="Ekblad T."/>
            <person name="Andersson C.D."/>
            <person name="Pinto A.F."/>
            <person name="Weigelt J."/>
            <person name="Hottiger M.O."/>
            <person name="Linusson A."/>
            <person name="Elofsson M."/>
            <person name="Schueler H."/>
        </authorList>
    </citation>
    <scope>X-RAY CRYSTALLOGRAPHY (1.80 ANGSTROMS) OF 178-532 IN COMPLEX WITH ME0328; ME0354 AND ME0355 INHIBITORS</scope>
    <scope>FUNCTION</scope>
    <scope>ACTIVITY REGULATION</scope>
</reference>
<reference evidence="33 34 35 36 37 38 39 40" key="22">
    <citation type="journal article" date="2013" name="J. Med. Chem.">
        <title>Chemical probes to study ADP-ribosylation: synthesis and biochemical evaluation of inhibitors of the human ADP-ribosyltransferase ARTD3/PARP3.</title>
        <authorList>
            <person name="Lindgren A.E."/>
            <person name="Karlberg T."/>
            <person name="Ekblad T."/>
            <person name="Spjut S."/>
            <person name="Thorsell A.G."/>
            <person name="Andersson C.D."/>
            <person name="Nhan T.T."/>
            <person name="Hellsten V."/>
            <person name="Weigelt J."/>
            <person name="Linusson A."/>
            <person name="Schueler H."/>
            <person name="Elofsson M."/>
        </authorList>
    </citation>
    <scope>X-RAY CRYSTALLOGRAPHY (1.80 ANGSTROMS) OF 178-532 IN COMPLEX WITH VARIOUS INHIBITORS</scope>
</reference>
<organism>
    <name type="scientific">Homo sapiens</name>
    <name type="common">Human</name>
    <dbReference type="NCBI Taxonomy" id="9606"/>
    <lineage>
        <taxon>Eukaryota</taxon>
        <taxon>Metazoa</taxon>
        <taxon>Chordata</taxon>
        <taxon>Craniata</taxon>
        <taxon>Vertebrata</taxon>
        <taxon>Euteleostomi</taxon>
        <taxon>Mammalia</taxon>
        <taxon>Eutheria</taxon>
        <taxon>Euarchontoglires</taxon>
        <taxon>Primates</taxon>
        <taxon>Haplorrhini</taxon>
        <taxon>Catarrhini</taxon>
        <taxon>Hominidae</taxon>
        <taxon>Homo</taxon>
    </lineage>
</organism>
<name>PARP3_HUMAN</name>
<accession>Q9Y6F1</accession>
<accession>Q8NER9</accession>
<accession>Q96CG2</accession>
<accession>Q9UG81</accession>
<feature type="chain" id="PRO_0000211329" description="Protein mono-ADP-ribosyltransferase PARP3">
    <location>
        <begin position="1"/>
        <end position="533"/>
    </location>
</feature>
<feature type="domain" description="WGR" evidence="5">
    <location>
        <begin position="59"/>
        <end position="150"/>
    </location>
</feature>
<feature type="domain" description="PARP alpha-helical" evidence="4">
    <location>
        <begin position="182"/>
        <end position="300"/>
    </location>
</feature>
<feature type="domain" description="PARP catalytic" evidence="3">
    <location>
        <begin position="313"/>
        <end position="533"/>
    </location>
</feature>
<feature type="region of interest" description="Disordered" evidence="6">
    <location>
        <begin position="1"/>
        <end position="30"/>
    </location>
</feature>
<feature type="region of interest" description="Disordered" evidence="6">
    <location>
        <begin position="454"/>
        <end position="482"/>
    </location>
</feature>
<feature type="short sequence motif" description="Nuclear localization signal" evidence="2">
    <location>
        <begin position="14"/>
        <end position="20"/>
    </location>
</feature>
<feature type="modified residue" description="N6-(ADP-ribosyl)lysine" evidence="15">
    <location>
        <position position="6"/>
    </location>
</feature>
<feature type="modified residue" description="ADP-ribosyl glutamic acid" evidence="15">
    <location>
        <position position="12"/>
    </location>
</feature>
<feature type="modified residue" description="ADP-ribosyl glutamic acid" evidence="15">
    <location>
        <position position="15"/>
    </location>
</feature>
<feature type="modified residue" description="ADP-ribosyl glutamic acid" evidence="15">
    <location>
        <position position="26"/>
    </location>
</feature>
<feature type="modified residue" description="ADP-ribosyl glutamic acid" evidence="15">
    <location>
        <position position="34"/>
    </location>
</feature>
<feature type="modified residue" description="N6-(ADP-ribosyl)lysine" evidence="15">
    <location>
        <position position="37"/>
    </location>
</feature>
<feature type="modified residue" description="ADP-ribosyl aspartic acid" evidence="15">
    <location>
        <position position="141"/>
    </location>
</feature>
<feature type="modified residue" description="ADP-ribosyl glutamic acid" evidence="15">
    <location>
        <position position="163"/>
    </location>
</feature>
<feature type="modified residue" description="ADP-ribosyl aspartic acid" evidence="15">
    <location>
        <position position="210"/>
    </location>
</feature>
<feature type="modified residue" description="ADP-ribosyl glutamic acid" evidence="15">
    <location>
        <position position="231"/>
    </location>
</feature>
<feature type="modified residue" description="ADP-ribosyl glutamic acid" evidence="15">
    <location>
        <position position="309"/>
    </location>
</feature>
<feature type="modified residue" description="ADP-ribosyl glutamic acid" evidence="15">
    <location>
        <position position="310"/>
    </location>
</feature>
<feature type="modified residue" description="ADP-ribosyl glutamic acid" evidence="15">
    <location>
        <position position="344"/>
    </location>
</feature>
<feature type="modified residue" description="ADP-ribosyl glutamic acid" evidence="15">
    <location>
        <position position="449"/>
    </location>
</feature>
<feature type="splice variant" id="VSP_007863" description="In isoform 2." evidence="21 23">
    <original>M</original>
    <variation>MSLLFLAM</variation>
    <location>
        <position position="1"/>
    </location>
</feature>
<feature type="sequence variant" id="VAR_056643" description="In dbSNP:rs34224216.">
    <original>S</original>
    <variation>N</variation>
    <location>
        <position position="91"/>
    </location>
</feature>
<feature type="sequence variant" id="VAR_054622" description="In dbSNP:rs28547534.">
    <original>R</original>
    <variation>H</variation>
    <location>
        <position position="100"/>
    </location>
</feature>
<feature type="sequence variant" id="VAR_056644" description="In dbSNP:rs323870.">
    <original>Q</original>
    <variation>R</variation>
    <location>
        <position position="269"/>
    </location>
</feature>
<feature type="mutagenesis site" description="Does not affect activation by nicked DNA, while it prevents activation by a 3'-overhang substrate." evidence="16">
    <original>Y</original>
    <variation>A</variation>
    <location>
        <position position="83"/>
    </location>
</feature>
<feature type="mutagenesis site" description="Reduced activity on nicked DNA." evidence="16">
    <original>W</original>
    <variation>L</variation>
    <location>
        <position position="101"/>
    </location>
</feature>
<feature type="mutagenesis site" description="Abolished activation by nicked DNA." evidence="16">
    <original>R</original>
    <variation>N</variation>
    <location>
        <position position="103"/>
    </location>
</feature>
<feature type="sequence conflict" description="In Ref. 1; AAD29855." evidence="24" ref="1">
    <original>N</original>
    <variation>K</variation>
    <location>
        <position position="80"/>
    </location>
</feature>
<feature type="sequence conflict" description="In Ref. 1; AAD29855." evidence="24" ref="1">
    <original>G</original>
    <variation>A</variation>
    <location>
        <position position="171"/>
    </location>
</feature>
<feature type="sequence conflict" description="In Ref. 6; CAB43246." evidence="24" ref="6">
    <original>K</original>
    <variation>E</variation>
    <location>
        <position position="411"/>
    </location>
</feature>
<feature type="strand" evidence="41">
    <location>
        <begin position="50"/>
        <end position="53"/>
    </location>
</feature>
<feature type="turn" evidence="41">
    <location>
        <begin position="54"/>
        <end position="56"/>
    </location>
</feature>
<feature type="strand" evidence="41">
    <location>
        <begin position="61"/>
        <end position="74"/>
    </location>
</feature>
<feature type="turn" evidence="41">
    <location>
        <begin position="75"/>
        <end position="78"/>
    </location>
</feature>
<feature type="strand" evidence="41">
    <location>
        <begin position="79"/>
        <end position="89"/>
    </location>
</feature>
<feature type="strand" evidence="41">
    <location>
        <begin position="95"/>
        <end position="100"/>
    </location>
</feature>
<feature type="strand" evidence="41">
    <location>
        <begin position="111"/>
        <end position="117"/>
    </location>
</feature>
<feature type="helix" evidence="41">
    <location>
        <begin position="118"/>
        <end position="133"/>
    </location>
</feature>
<feature type="helix" evidence="41">
    <location>
        <begin position="140"/>
        <end position="142"/>
    </location>
</feature>
<feature type="strand" evidence="41">
    <location>
        <begin position="147"/>
        <end position="149"/>
    </location>
</feature>
<feature type="strand" evidence="41">
    <location>
        <begin position="151"/>
        <end position="153"/>
    </location>
</feature>
<feature type="helix" evidence="43">
    <location>
        <begin position="187"/>
        <end position="196"/>
    </location>
</feature>
<feature type="helix" evidence="43">
    <location>
        <begin position="199"/>
        <end position="208"/>
    </location>
</feature>
<feature type="turn" evidence="43">
    <location>
        <begin position="213"/>
        <end position="215"/>
    </location>
</feature>
<feature type="turn" evidence="43">
    <location>
        <begin position="218"/>
        <end position="220"/>
    </location>
</feature>
<feature type="helix" evidence="43">
    <location>
        <begin position="223"/>
        <end position="240"/>
    </location>
</feature>
<feature type="strand" evidence="42">
    <location>
        <begin position="246"/>
        <end position="248"/>
    </location>
</feature>
<feature type="helix" evidence="43">
    <location>
        <begin position="250"/>
        <end position="260"/>
    </location>
</feature>
<feature type="strand" evidence="42">
    <location>
        <begin position="265"/>
        <end position="268"/>
    </location>
</feature>
<feature type="helix" evidence="43">
    <location>
        <begin position="276"/>
        <end position="298"/>
    </location>
</feature>
<feature type="helix" evidence="43">
    <location>
        <begin position="303"/>
        <end position="307"/>
    </location>
</feature>
<feature type="strand" evidence="43">
    <location>
        <begin position="309"/>
        <end position="311"/>
    </location>
</feature>
<feature type="helix" evidence="43">
    <location>
        <begin position="314"/>
        <end position="321"/>
    </location>
</feature>
<feature type="strand" evidence="43">
    <location>
        <begin position="325"/>
        <end position="328"/>
    </location>
</feature>
<feature type="helix" evidence="43">
    <location>
        <begin position="336"/>
        <end position="346"/>
    </location>
</feature>
<feature type="strand" evidence="43">
    <location>
        <begin position="349"/>
        <end position="351"/>
    </location>
</feature>
<feature type="strand" evidence="43">
    <location>
        <begin position="354"/>
        <end position="362"/>
    </location>
</feature>
<feature type="turn" evidence="42">
    <location>
        <begin position="364"/>
        <end position="366"/>
    </location>
</feature>
<feature type="helix" evidence="43">
    <location>
        <begin position="367"/>
        <end position="371"/>
    </location>
</feature>
<feature type="turn" evidence="43">
    <location>
        <begin position="372"/>
        <end position="375"/>
    </location>
</feature>
<feature type="strand" evidence="43">
    <location>
        <begin position="379"/>
        <end position="385"/>
    </location>
</feature>
<feature type="helix" evidence="43">
    <location>
        <begin position="388"/>
        <end position="390"/>
    </location>
</feature>
<feature type="helix" evidence="43">
    <location>
        <begin position="391"/>
        <end position="397"/>
    </location>
</feature>
<feature type="strand" evidence="43">
    <location>
        <begin position="411"/>
        <end position="418"/>
    </location>
</feature>
<feature type="helix" evidence="43">
    <location>
        <begin position="419"/>
        <end position="423"/>
    </location>
</feature>
<feature type="strand" evidence="43">
    <location>
        <begin position="429"/>
        <end position="431"/>
    </location>
</feature>
<feature type="strand" evidence="43">
    <location>
        <begin position="434"/>
        <end position="445"/>
    </location>
</feature>
<feature type="strand" evidence="43">
    <location>
        <begin position="448"/>
        <end position="454"/>
    </location>
</feature>
<feature type="strand" evidence="43">
    <location>
        <begin position="467"/>
        <end position="471"/>
    </location>
</feature>
<feature type="strand" evidence="43">
    <location>
        <begin position="473"/>
        <end position="477"/>
    </location>
</feature>
<feature type="helix" evidence="43">
    <location>
        <begin position="479"/>
        <end position="481"/>
    </location>
</feature>
<feature type="strand" evidence="43">
    <location>
        <begin position="483"/>
        <end position="487"/>
    </location>
</feature>
<feature type="strand" evidence="43">
    <location>
        <begin position="490"/>
        <end position="494"/>
    </location>
</feature>
<feature type="strand" evidence="43">
    <location>
        <begin position="499"/>
        <end position="501"/>
    </location>
</feature>
<feature type="helix" evidence="43">
    <location>
        <begin position="503"/>
        <end position="505"/>
    </location>
</feature>
<feature type="strand" evidence="43">
    <location>
        <begin position="509"/>
        <end position="512"/>
    </location>
</feature>
<feature type="strand" evidence="43">
    <location>
        <begin position="514"/>
        <end position="519"/>
    </location>
</feature>
<feature type="helix" evidence="43">
    <location>
        <begin position="520"/>
        <end position="522"/>
    </location>
</feature>
<feature type="strand" evidence="43">
    <location>
        <begin position="523"/>
        <end position="532"/>
    </location>
</feature>
<keyword id="KW-0002">3D-structure</keyword>
<keyword id="KW-0013">ADP-ribosylation</keyword>
<keyword id="KW-0025">Alternative splicing</keyword>
<keyword id="KW-0158">Chromosome</keyword>
<keyword id="KW-0963">Cytoplasm</keyword>
<keyword id="KW-0206">Cytoskeleton</keyword>
<keyword id="KW-0227">DNA damage</keyword>
<keyword id="KW-0234">DNA repair</keyword>
<keyword id="KW-0328">Glycosyltransferase</keyword>
<keyword id="KW-0520">NAD</keyword>
<keyword id="KW-0548">Nucleotidyltransferase</keyword>
<keyword id="KW-0539">Nucleus</keyword>
<keyword id="KW-1267">Proteomics identification</keyword>
<keyword id="KW-1185">Reference proteome</keyword>
<keyword id="KW-0808">Transferase</keyword>
<dbReference type="EC" id="2.4.2.-" evidence="8 15 16 18"/>
<dbReference type="EMBL" id="AF083068">
    <property type="protein sequence ID" value="AAD29855.1"/>
    <property type="molecule type" value="mRNA"/>
</dbReference>
<dbReference type="EMBL" id="AY126341">
    <property type="protein sequence ID" value="AAM95460.1"/>
    <property type="molecule type" value="mRNA"/>
</dbReference>
<dbReference type="EMBL" id="Y16836">
    <property type="protein sequence ID" value="CAC79988.1"/>
    <property type="molecule type" value="mRNA"/>
</dbReference>
<dbReference type="EMBL" id="AC115284">
    <property type="status" value="NOT_ANNOTATED_CDS"/>
    <property type="molecule type" value="Genomic_DNA"/>
</dbReference>
<dbReference type="EMBL" id="BC014260">
    <property type="protein sequence ID" value="AAH14260.1"/>
    <property type="molecule type" value="mRNA"/>
</dbReference>
<dbReference type="EMBL" id="AL050034">
    <property type="protein sequence ID" value="CAB43246.1"/>
    <property type="molecule type" value="mRNA"/>
</dbReference>
<dbReference type="CCDS" id="CCDS43097.1">
    <molecule id="Q9Y6F1-1"/>
</dbReference>
<dbReference type="PIR" id="T08713">
    <property type="entry name" value="T08713"/>
</dbReference>
<dbReference type="RefSeq" id="NP_001003931.4">
    <molecule id="Q9Y6F1-1"/>
    <property type="nucleotide sequence ID" value="NM_001003931.4"/>
</dbReference>
<dbReference type="RefSeq" id="NP_001357168.1">
    <molecule id="Q9Y6F1-1"/>
    <property type="nucleotide sequence ID" value="NM_001370239.1"/>
</dbReference>
<dbReference type="RefSeq" id="NP_001357169.1">
    <molecule id="Q9Y6F1-1"/>
    <property type="nucleotide sequence ID" value="NM_001370240.1"/>
</dbReference>
<dbReference type="RefSeq" id="NP_005476.4">
    <molecule id="Q9Y6F1-1"/>
    <property type="nucleotide sequence ID" value="NM_005485.6"/>
</dbReference>
<dbReference type="RefSeq" id="XP_005264836.2">
    <property type="nucleotide sequence ID" value="XM_005264779.4"/>
</dbReference>
<dbReference type="RefSeq" id="XP_016860979.1">
    <property type="nucleotide sequence ID" value="XM_017005490.1"/>
</dbReference>
<dbReference type="RefSeq" id="XP_047303043.1">
    <molecule id="Q9Y6F1-1"/>
    <property type="nucleotide sequence ID" value="XM_047447087.1"/>
</dbReference>
<dbReference type="RefSeq" id="XP_054200797.1">
    <molecule id="Q9Y6F1-1"/>
    <property type="nucleotide sequence ID" value="XM_054344822.1"/>
</dbReference>
<dbReference type="PDB" id="2EOC">
    <property type="method" value="NMR"/>
    <property type="chains" value="A=41-157"/>
</dbReference>
<dbReference type="PDB" id="3C49">
    <property type="method" value="X-ray"/>
    <property type="resolution" value="2.80 A"/>
    <property type="chains" value="A=178-532"/>
</dbReference>
<dbReference type="PDB" id="3C4H">
    <property type="method" value="X-ray"/>
    <property type="resolution" value="2.10 A"/>
    <property type="chains" value="A=178-532"/>
</dbReference>
<dbReference type="PDB" id="3CE0">
    <property type="method" value="X-ray"/>
    <property type="resolution" value="2.80 A"/>
    <property type="chains" value="A=178-532"/>
</dbReference>
<dbReference type="PDB" id="3FHB">
    <property type="method" value="X-ray"/>
    <property type="resolution" value="2.30 A"/>
    <property type="chains" value="A=178-532"/>
</dbReference>
<dbReference type="PDB" id="4GV0">
    <property type="method" value="X-ray"/>
    <property type="resolution" value="1.90 A"/>
    <property type="chains" value="A=178-532"/>
</dbReference>
<dbReference type="PDB" id="4GV2">
    <property type="method" value="X-ray"/>
    <property type="resolution" value="1.80 A"/>
    <property type="chains" value="A=178-532"/>
</dbReference>
<dbReference type="PDB" id="4GV4">
    <property type="method" value="X-ray"/>
    <property type="resolution" value="1.80 A"/>
    <property type="chains" value="A=178-532"/>
</dbReference>
<dbReference type="PDB" id="4L6Z">
    <property type="method" value="X-ray"/>
    <property type="resolution" value="2.00 A"/>
    <property type="chains" value="A=178-532"/>
</dbReference>
<dbReference type="PDB" id="4L70">
    <property type="method" value="X-ray"/>
    <property type="resolution" value="2.00 A"/>
    <property type="chains" value="A=178-532"/>
</dbReference>
<dbReference type="PDB" id="4L7L">
    <property type="method" value="X-ray"/>
    <property type="resolution" value="2.10 A"/>
    <property type="chains" value="A=178-532"/>
</dbReference>
<dbReference type="PDB" id="4L7N">
    <property type="method" value="X-ray"/>
    <property type="resolution" value="1.80 A"/>
    <property type="chains" value="A=178-532"/>
</dbReference>
<dbReference type="PDB" id="4L7O">
    <property type="method" value="X-ray"/>
    <property type="resolution" value="2.00 A"/>
    <property type="chains" value="A=178-532"/>
</dbReference>
<dbReference type="PDB" id="4L7P">
    <property type="method" value="X-ray"/>
    <property type="resolution" value="2.30 A"/>
    <property type="chains" value="A=178-532"/>
</dbReference>
<dbReference type="PDB" id="4L7R">
    <property type="method" value="X-ray"/>
    <property type="resolution" value="2.20 A"/>
    <property type="chains" value="A=178-532"/>
</dbReference>
<dbReference type="PDB" id="4L7U">
    <property type="method" value="X-ray"/>
    <property type="resolution" value="2.80 A"/>
    <property type="chains" value="A=178-532"/>
</dbReference>
<dbReference type="PDBsum" id="2EOC"/>
<dbReference type="PDBsum" id="3C49"/>
<dbReference type="PDBsum" id="3C4H"/>
<dbReference type="PDBsum" id="3CE0"/>
<dbReference type="PDBsum" id="3FHB"/>
<dbReference type="PDBsum" id="4GV0"/>
<dbReference type="PDBsum" id="4GV2"/>
<dbReference type="PDBsum" id="4GV4"/>
<dbReference type="PDBsum" id="4L6Z"/>
<dbReference type="PDBsum" id="4L70"/>
<dbReference type="PDBsum" id="4L7L"/>
<dbReference type="PDBsum" id="4L7N"/>
<dbReference type="PDBsum" id="4L7O"/>
<dbReference type="PDBsum" id="4L7P"/>
<dbReference type="PDBsum" id="4L7R"/>
<dbReference type="PDBsum" id="4L7U"/>
<dbReference type="SMR" id="Q9Y6F1"/>
<dbReference type="BioGRID" id="115351">
    <property type="interactions" value="29"/>
</dbReference>
<dbReference type="CORUM" id="Q9Y6F1"/>
<dbReference type="FunCoup" id="Q9Y6F1">
    <property type="interactions" value="423"/>
</dbReference>
<dbReference type="IntAct" id="Q9Y6F1">
    <property type="interactions" value="5"/>
</dbReference>
<dbReference type="STRING" id="9606.ENSP00000381740"/>
<dbReference type="BindingDB" id="Q9Y6F1"/>
<dbReference type="ChEMBL" id="CHEMBL5083"/>
<dbReference type="DrugBank" id="DB07677">
    <property type="generic name" value="2-methyl-3,5,7,8-tetrahydro-4H-thiopyrano[4,3-d]pyrimidin-4-one"/>
</dbReference>
<dbReference type="DrugBank" id="DB08058">
    <property type="generic name" value="4-[3-(1,4-diazepan-1-ylcarbonyl)-4-fluorobenzyl]phthalazin-1(2H)-one"/>
</dbReference>
<dbReference type="DrugBank" id="DB08348">
    <property type="generic name" value="N~2~,N~2~-DIMETHYL-N~1~-(6-OXO-5,6-DIHYDROPHENANTHRIDIN-2-YL)GLYCINAMIDE"/>
</dbReference>
<dbReference type="DrugBank" id="DB09074">
    <property type="generic name" value="Olaparib"/>
</dbReference>
<dbReference type="DrugBank" id="DB12332">
    <property type="generic name" value="Rucaparib"/>
</dbReference>
<dbReference type="DrugCentral" id="Q9Y6F1"/>
<dbReference type="GuidetoPHARMACOLOGY" id="2864"/>
<dbReference type="GlyGen" id="Q9Y6F1">
    <property type="glycosylation" value="1 site"/>
</dbReference>
<dbReference type="iPTMnet" id="Q9Y6F1"/>
<dbReference type="PhosphoSitePlus" id="Q9Y6F1"/>
<dbReference type="BioMuta" id="PARP3"/>
<dbReference type="DMDM" id="224471880"/>
<dbReference type="jPOST" id="Q9Y6F1"/>
<dbReference type="MassIVE" id="Q9Y6F1"/>
<dbReference type="PaxDb" id="9606-ENSP00000381740"/>
<dbReference type="PeptideAtlas" id="Q9Y6F1"/>
<dbReference type="ProteomicsDB" id="86661">
    <molecule id="Q9Y6F1-1"/>
</dbReference>
<dbReference type="ProteomicsDB" id="86662">
    <molecule id="Q9Y6F1-2"/>
</dbReference>
<dbReference type="Antibodypedia" id="7395">
    <property type="antibodies" value="300 antibodies from 37 providers"/>
</dbReference>
<dbReference type="DNASU" id="10039"/>
<dbReference type="Ensembl" id="ENST00000398755.8">
    <molecule id="Q9Y6F1-1"/>
    <property type="protein sequence ID" value="ENSP00000381740.4"/>
    <property type="gene ID" value="ENSG00000041880.15"/>
</dbReference>
<dbReference type="Ensembl" id="ENST00000417220.6">
    <molecule id="Q9Y6F1-1"/>
    <property type="protein sequence ID" value="ENSP00000395951.2"/>
    <property type="gene ID" value="ENSG00000041880.15"/>
</dbReference>
<dbReference type="Ensembl" id="ENST00000431474.6">
    <molecule id="Q9Y6F1-1"/>
    <property type="protein sequence ID" value="ENSP00000401511.1"/>
    <property type="gene ID" value="ENSG00000041880.15"/>
</dbReference>
<dbReference type="Ensembl" id="ENST00000471971.6">
    <molecule id="Q9Y6F1-1"/>
    <property type="protein sequence ID" value="ENSP00000417396.2"/>
    <property type="gene ID" value="ENSG00000041880.15"/>
</dbReference>
<dbReference type="Ensembl" id="ENST00000498510.2">
    <molecule id="Q9Y6F1-1"/>
    <property type="protein sequence ID" value="ENSP00000417625.2"/>
    <property type="gene ID" value="ENSG00000041880.15"/>
</dbReference>
<dbReference type="GeneID" id="10039"/>
<dbReference type="KEGG" id="hsa:10039"/>
<dbReference type="MANE-Select" id="ENST00000398755.8">
    <property type="protein sequence ID" value="ENSP00000381740.4"/>
    <property type="RefSeq nucleotide sequence ID" value="NM_001003931.4"/>
    <property type="RefSeq protein sequence ID" value="NP_001003931.4"/>
</dbReference>
<dbReference type="UCSC" id="uc003dbz.4">
    <molecule id="Q9Y6F1-1"/>
    <property type="organism name" value="human"/>
</dbReference>
<dbReference type="AGR" id="HGNC:273"/>
<dbReference type="CTD" id="10039"/>
<dbReference type="DisGeNET" id="10039"/>
<dbReference type="GeneCards" id="PARP3"/>
<dbReference type="HGNC" id="HGNC:273">
    <property type="gene designation" value="PARP3"/>
</dbReference>
<dbReference type="HPA" id="ENSG00000041880">
    <property type="expression patterns" value="Low tissue specificity"/>
</dbReference>
<dbReference type="MIM" id="607726">
    <property type="type" value="gene"/>
</dbReference>
<dbReference type="neXtProt" id="NX_Q9Y6F1"/>
<dbReference type="OpenTargets" id="ENSG00000041880"/>
<dbReference type="PharmGKB" id="PA24593"/>
<dbReference type="VEuPathDB" id="HostDB:ENSG00000041880"/>
<dbReference type="eggNOG" id="KOG1037">
    <property type="taxonomic scope" value="Eukaryota"/>
</dbReference>
<dbReference type="GeneTree" id="ENSGT00940000158855"/>
<dbReference type="InParanoid" id="Q9Y6F1"/>
<dbReference type="OMA" id="HHITTDN"/>
<dbReference type="OrthoDB" id="2017365at2759"/>
<dbReference type="PAN-GO" id="Q9Y6F1">
    <property type="GO annotations" value="6 GO annotations based on evolutionary models"/>
</dbReference>
<dbReference type="PhylomeDB" id="Q9Y6F1"/>
<dbReference type="TreeFam" id="TF315407"/>
<dbReference type="BRENDA" id="2.4.2.30">
    <property type="organism ID" value="2681"/>
</dbReference>
<dbReference type="PathwayCommons" id="Q9Y6F1"/>
<dbReference type="SignaLink" id="Q9Y6F1"/>
<dbReference type="SIGNOR" id="Q9Y6F1"/>
<dbReference type="BioGRID-ORCS" id="10039">
    <property type="hits" value="16 hits in 1166 CRISPR screens"/>
</dbReference>
<dbReference type="CD-CODE" id="8C2F96ED">
    <property type="entry name" value="Centrosome"/>
</dbReference>
<dbReference type="ChiTaRS" id="PARP3">
    <property type="organism name" value="human"/>
</dbReference>
<dbReference type="EvolutionaryTrace" id="Q9Y6F1"/>
<dbReference type="GeneWiki" id="PARP3"/>
<dbReference type="GenomeRNAi" id="10039"/>
<dbReference type="Pharos" id="Q9Y6F1">
    <property type="development level" value="Tclin"/>
</dbReference>
<dbReference type="PRO" id="PR:Q9Y6F1"/>
<dbReference type="Proteomes" id="UP000005640">
    <property type="component" value="Chromosome 3"/>
</dbReference>
<dbReference type="RNAct" id="Q9Y6F1">
    <property type="molecule type" value="protein"/>
</dbReference>
<dbReference type="Bgee" id="ENSG00000041880">
    <property type="expression patterns" value="Expressed in right adrenal gland cortex and 135 other cell types or tissues"/>
</dbReference>
<dbReference type="ExpressionAtlas" id="Q9Y6F1">
    <property type="expression patterns" value="baseline and differential"/>
</dbReference>
<dbReference type="GO" id="GO:0005814">
    <property type="term" value="C:centriole"/>
    <property type="evidence" value="ECO:0007669"/>
    <property type="project" value="UniProtKB-SubCell"/>
</dbReference>
<dbReference type="GO" id="GO:0005813">
    <property type="term" value="C:centrosome"/>
    <property type="evidence" value="ECO:0007669"/>
    <property type="project" value="UniProtKB-SubCell"/>
</dbReference>
<dbReference type="GO" id="GO:0005737">
    <property type="term" value="C:cytoplasm"/>
    <property type="evidence" value="ECO:0007669"/>
    <property type="project" value="UniProtKB-KW"/>
</dbReference>
<dbReference type="GO" id="GO:0045171">
    <property type="term" value="C:intercellular bridge"/>
    <property type="evidence" value="ECO:0000314"/>
    <property type="project" value="HPA"/>
</dbReference>
<dbReference type="GO" id="GO:0016604">
    <property type="term" value="C:nuclear body"/>
    <property type="evidence" value="ECO:0000314"/>
    <property type="project" value="HPA"/>
</dbReference>
<dbReference type="GO" id="GO:0005730">
    <property type="term" value="C:nucleolus"/>
    <property type="evidence" value="ECO:0000318"/>
    <property type="project" value="GO_Central"/>
</dbReference>
<dbReference type="GO" id="GO:0005654">
    <property type="term" value="C:nucleoplasm"/>
    <property type="evidence" value="ECO:0000314"/>
    <property type="project" value="HPA"/>
</dbReference>
<dbReference type="GO" id="GO:0035861">
    <property type="term" value="C:site of double-strand break"/>
    <property type="evidence" value="ECO:0000314"/>
    <property type="project" value="MGI"/>
</dbReference>
<dbReference type="GO" id="GO:0003824">
    <property type="term" value="F:catalytic activity"/>
    <property type="evidence" value="ECO:0000304"/>
    <property type="project" value="ProtInc"/>
</dbReference>
<dbReference type="GO" id="GO:0140294">
    <property type="term" value="F:NAD DNA ADP-ribosyltransferase activity"/>
    <property type="evidence" value="ECO:0000314"/>
    <property type="project" value="UniProtKB"/>
</dbReference>
<dbReference type="GO" id="GO:0003950">
    <property type="term" value="F:NAD+ poly-ADP-ribosyltransferase activity"/>
    <property type="evidence" value="ECO:0000314"/>
    <property type="project" value="MGI"/>
</dbReference>
<dbReference type="GO" id="GO:1990404">
    <property type="term" value="F:NAD+-protein mono-ADP-ribosyltransferase activity"/>
    <property type="evidence" value="ECO:0000314"/>
    <property type="project" value="UniProtKB"/>
</dbReference>
<dbReference type="GO" id="GO:0140806">
    <property type="term" value="F:NAD+-protein-aspartate ADP-ribosyltransferase activity"/>
    <property type="evidence" value="ECO:0000314"/>
    <property type="project" value="UniProtKB"/>
</dbReference>
<dbReference type="GO" id="GO:0140807">
    <property type="term" value="F:NAD+-protein-glutamate ADP-ribosyltransferase activity"/>
    <property type="evidence" value="ECO:0000314"/>
    <property type="project" value="UniProtKB"/>
</dbReference>
<dbReference type="GO" id="GO:0140804">
    <property type="term" value="F:NAD+-protein-lysine ADP-ribosyltransferase activity"/>
    <property type="evidence" value="ECO:0000314"/>
    <property type="project" value="UniProtKB"/>
</dbReference>
<dbReference type="GO" id="GO:0016779">
    <property type="term" value="F:nucleotidyltransferase activity"/>
    <property type="evidence" value="ECO:0007669"/>
    <property type="project" value="UniProtKB-KW"/>
</dbReference>
<dbReference type="GO" id="GO:0030592">
    <property type="term" value="P:DNA ADP-ribosylation"/>
    <property type="evidence" value="ECO:0000314"/>
    <property type="project" value="UniProtKB"/>
</dbReference>
<dbReference type="GO" id="GO:0006302">
    <property type="term" value="P:double-strand break repair"/>
    <property type="evidence" value="ECO:0000314"/>
    <property type="project" value="MGI"/>
</dbReference>
<dbReference type="GO" id="GO:0006303">
    <property type="term" value="P:double-strand break repair via nonhomologous end joining"/>
    <property type="evidence" value="ECO:0000316"/>
    <property type="project" value="MGI"/>
</dbReference>
<dbReference type="GO" id="GO:0045829">
    <property type="term" value="P:negative regulation of isotype switching"/>
    <property type="evidence" value="ECO:0000250"/>
    <property type="project" value="UniProtKB"/>
</dbReference>
<dbReference type="GO" id="GO:0032211">
    <property type="term" value="P:negative regulation of telomere maintenance via telomerase"/>
    <property type="evidence" value="ECO:0000304"/>
    <property type="project" value="BHF-UCL"/>
</dbReference>
<dbReference type="GO" id="GO:2001034">
    <property type="term" value="P:positive regulation of double-strand break repair via nonhomologous end joining"/>
    <property type="evidence" value="ECO:0000314"/>
    <property type="project" value="UniProtKB"/>
</dbReference>
<dbReference type="GO" id="GO:0070213">
    <property type="term" value="P:protein auto-ADP-ribosylation"/>
    <property type="evidence" value="ECO:0000314"/>
    <property type="project" value="UniProtKB"/>
</dbReference>
<dbReference type="GO" id="GO:1990166">
    <property type="term" value="P:protein localization to site of double-strand break"/>
    <property type="evidence" value="ECO:0000315"/>
    <property type="project" value="MGI"/>
</dbReference>
<dbReference type="GO" id="GO:0060236">
    <property type="term" value="P:regulation of mitotic spindle organization"/>
    <property type="evidence" value="ECO:0000315"/>
    <property type="project" value="MGI"/>
</dbReference>
<dbReference type="GO" id="GO:0000723">
    <property type="term" value="P:telomere maintenance"/>
    <property type="evidence" value="ECO:0000315"/>
    <property type="project" value="MGI"/>
</dbReference>
<dbReference type="CDD" id="cd01437">
    <property type="entry name" value="parp_like"/>
    <property type="match status" value="1"/>
</dbReference>
<dbReference type="CDD" id="cd08002">
    <property type="entry name" value="WGR_PARP3_like"/>
    <property type="match status" value="1"/>
</dbReference>
<dbReference type="FunFam" id="1.20.142.10:FF:000006">
    <property type="entry name" value="Poly [ADP-ribose] polymerase"/>
    <property type="match status" value="1"/>
</dbReference>
<dbReference type="FunFam" id="2.20.140.10:FF:000001">
    <property type="entry name" value="Poly [ADP-ribose] polymerase"/>
    <property type="match status" value="1"/>
</dbReference>
<dbReference type="FunFam" id="3.90.228.10:FF:000009">
    <property type="entry name" value="Poly [ADP-ribose] polymerase"/>
    <property type="match status" value="1"/>
</dbReference>
<dbReference type="Gene3D" id="3.90.228.10">
    <property type="match status" value="1"/>
</dbReference>
<dbReference type="Gene3D" id="1.20.142.10">
    <property type="entry name" value="Poly(ADP-ribose) polymerase, regulatory domain"/>
    <property type="match status" value="1"/>
</dbReference>
<dbReference type="Gene3D" id="2.20.140.10">
    <property type="entry name" value="WGR domain"/>
    <property type="match status" value="1"/>
</dbReference>
<dbReference type="InterPro" id="IPR050800">
    <property type="entry name" value="ARTD/PARP"/>
</dbReference>
<dbReference type="InterPro" id="IPR012317">
    <property type="entry name" value="Poly(ADP-ribose)pol_cat_dom"/>
</dbReference>
<dbReference type="InterPro" id="IPR004102">
    <property type="entry name" value="Poly(ADP-ribose)pol_reg_dom"/>
</dbReference>
<dbReference type="InterPro" id="IPR036616">
    <property type="entry name" value="Poly(ADP-ribose)pol_reg_dom_sf"/>
</dbReference>
<dbReference type="InterPro" id="IPR036930">
    <property type="entry name" value="WGR_dom_sf"/>
</dbReference>
<dbReference type="InterPro" id="IPR008893">
    <property type="entry name" value="WGR_domain"/>
</dbReference>
<dbReference type="PANTHER" id="PTHR10459">
    <property type="entry name" value="DNA LIGASE"/>
    <property type="match status" value="1"/>
</dbReference>
<dbReference type="PANTHER" id="PTHR10459:SF66">
    <property type="entry name" value="PROTEIN MONO-ADP-RIBOSYLTRANSFERASE PARP3"/>
    <property type="match status" value="1"/>
</dbReference>
<dbReference type="Pfam" id="PF00644">
    <property type="entry name" value="PARP"/>
    <property type="match status" value="1"/>
</dbReference>
<dbReference type="Pfam" id="PF02877">
    <property type="entry name" value="PARP_reg"/>
    <property type="match status" value="1"/>
</dbReference>
<dbReference type="Pfam" id="PF05406">
    <property type="entry name" value="WGR"/>
    <property type="match status" value="1"/>
</dbReference>
<dbReference type="SMART" id="SM00773">
    <property type="entry name" value="WGR"/>
    <property type="match status" value="1"/>
</dbReference>
<dbReference type="SUPFAM" id="SSF56399">
    <property type="entry name" value="ADP-ribosylation"/>
    <property type="match status" value="1"/>
</dbReference>
<dbReference type="SUPFAM" id="SSF47587">
    <property type="entry name" value="Domain of poly(ADP-ribose) polymerase"/>
    <property type="match status" value="1"/>
</dbReference>
<dbReference type="SUPFAM" id="SSF142921">
    <property type="entry name" value="WGR domain-like"/>
    <property type="match status" value="1"/>
</dbReference>
<dbReference type="PROSITE" id="PS51060">
    <property type="entry name" value="PARP_ALPHA_HD"/>
    <property type="match status" value="1"/>
</dbReference>
<dbReference type="PROSITE" id="PS51059">
    <property type="entry name" value="PARP_CATALYTIC"/>
    <property type="match status" value="1"/>
</dbReference>
<dbReference type="PROSITE" id="PS51977">
    <property type="entry name" value="WGR"/>
    <property type="match status" value="1"/>
</dbReference>
<protein>
    <recommendedName>
        <fullName evidence="24">Protein mono-ADP-ribosyltransferase PARP3</fullName>
        <ecNumber evidence="8 15 16">2.4.2.-</ecNumber>
    </recommendedName>
    <alternativeName>
        <fullName evidence="22">ADP-ribosyltransferase diphtheria toxin-like 3</fullName>
        <shortName evidence="22">ARTD3</shortName>
    </alternativeName>
    <alternativeName>
        <fullName evidence="24">DNA ADP-ribosyltransferase PARP3</fullName>
        <ecNumber evidence="18">2.4.2.-</ecNumber>
    </alternativeName>
    <alternativeName>
        <fullName>IRT1</fullName>
    </alternativeName>
    <alternativeName>
        <fullName evidence="22">NAD(+) ADP-ribosyltransferase 3</fullName>
        <shortName evidence="22">ADPRT-3</shortName>
    </alternativeName>
    <alternativeName>
        <fullName evidence="21 22">Poly [ADP-ribose] polymerase 3</fullName>
        <shortName evidence="21">PARP-3</shortName>
        <shortName evidence="21">hPARP-3</shortName>
    </alternativeName>
    <alternativeName>
        <fullName evidence="22">Poly[ADP-ribose] synthase 3</fullName>
        <shortName evidence="22">pADPRT-3</shortName>
    </alternativeName>
</protein>
<comment type="function">
    <text evidence="1 8 9 10 11 12 13 14 15 16 17 18 19">Mono-ADP-ribosyltransferase that mediates mono-ADP-ribosylation of target proteins and plays a key role in the response to DNA damage (PubMed:16924674, PubMed:19354255, PubMed:20064938, PubMed:21211721, PubMed:21270334, PubMed:23742272, PubMed:24598253, PubMed:25043379, PubMed:28447610). Mediates mono-ADP-ribosylation of glutamate, aspartate or lysine residues on target proteins (PubMed:20064938, PubMed:25043379). In contrast to PARP1 and PARP2, it is not able to mediate poly-ADP-ribosylation (PubMed:25043379). Involved in DNA repair by mediating mono-ADP-ribosylation of a limited number of acceptor proteins involved in chromatin architecture and in DNA metabolism, such as histone H2B, XRCC5 and XRCC6 (PubMed:16924674, PubMed:24598253). ADP-ribosylation follows DNA damage and appears as an obligatory step in a detection/signaling pathway leading to the reparation of DNA strand breaks (PubMed:16924674, PubMed:21211721, PubMed:21270334). Involved in single-strand break repair by catalyzing mono-ADP-ribosylation of histone H2B on 'Glu-2' (H2BE2ADPr) of nucleosomes containing nicked DNA (PubMed:27530147). Cooperates with the XRCC5-XRCC6 (Ku80-Ku70) heterodimer to limit end-resection thereby promoting accurate NHEJ (PubMed:24598253). Suppresses G-quadruplex (G4) structures in response to DNA damage (PubMed:28447610). Associates with a number of DNA repair factors and is involved in the response to exogenous and endogenous DNA strand breaks (PubMed:16924674, PubMed:21211721, PubMed:21270334). Together with APLF, promotes the retention of the LIG4-XRCC4 complex on chromatin and accelerate DNA ligation during non-homologous end-joining (NHEJ) (PubMed:21211721). May link the DNA damage surveillance network to the mitotic fidelity checkpoint (PubMed:16924674). Acts as a negative regulator of immunoglobulin class switch recombination, probably by controlling the level of AICDA /AID on the chromatin (By similarity). In addition to proteins, also able to ADP-ribosylate DNA: mediates DNA mono-ADP-ribosylation of DNA strand break termini via covalent addition of a single ADP-ribose moiety to a 5'- or 3'-terminal phosphate residues in DNA containing multiple strand breaks (PubMed:29361132, PubMed:29520010).</text>
</comment>
<comment type="catalytic activity">
    <reaction evidence="10 15">
        <text>L-aspartyl-[protein] + NAD(+) = 4-O-(ADP-D-ribosyl)-L-aspartyl-[protein] + nicotinamide</text>
        <dbReference type="Rhea" id="RHEA:54424"/>
        <dbReference type="Rhea" id="RHEA-COMP:9867"/>
        <dbReference type="Rhea" id="RHEA-COMP:13832"/>
        <dbReference type="ChEBI" id="CHEBI:17154"/>
        <dbReference type="ChEBI" id="CHEBI:29961"/>
        <dbReference type="ChEBI" id="CHEBI:57540"/>
        <dbReference type="ChEBI" id="CHEBI:138102"/>
    </reaction>
    <physiologicalReaction direction="left-to-right" evidence="10 15">
        <dbReference type="Rhea" id="RHEA:54425"/>
    </physiologicalReaction>
</comment>
<comment type="catalytic activity">
    <reaction evidence="10 15 16">
        <text>L-glutamyl-[protein] + NAD(+) = 5-O-(ADP-D-ribosyl)-L-glutamyl-[protein] + nicotinamide</text>
        <dbReference type="Rhea" id="RHEA:58224"/>
        <dbReference type="Rhea" id="RHEA-COMP:10208"/>
        <dbReference type="Rhea" id="RHEA-COMP:15089"/>
        <dbReference type="ChEBI" id="CHEBI:17154"/>
        <dbReference type="ChEBI" id="CHEBI:29973"/>
        <dbReference type="ChEBI" id="CHEBI:57540"/>
        <dbReference type="ChEBI" id="CHEBI:142540"/>
    </reaction>
    <physiologicalReaction direction="left-to-right" evidence="10 15 16">
        <dbReference type="Rhea" id="RHEA:58225"/>
    </physiologicalReaction>
</comment>
<comment type="catalytic activity">
    <reaction evidence="15">
        <text>L-lysyl-[protein] + NAD(+) = N(6)-(ADP-D-ribosyl)-L-lysyl-[protein] + nicotinamide + H(+)</text>
        <dbReference type="Rhea" id="RHEA:58220"/>
        <dbReference type="Rhea" id="RHEA-COMP:9752"/>
        <dbReference type="Rhea" id="RHEA-COMP:15088"/>
        <dbReference type="ChEBI" id="CHEBI:15378"/>
        <dbReference type="ChEBI" id="CHEBI:17154"/>
        <dbReference type="ChEBI" id="CHEBI:29969"/>
        <dbReference type="ChEBI" id="CHEBI:57540"/>
        <dbReference type="ChEBI" id="CHEBI:142515"/>
    </reaction>
    <physiologicalReaction direction="left-to-right" evidence="15">
        <dbReference type="Rhea" id="RHEA:58221"/>
    </physiologicalReaction>
</comment>
<comment type="activity regulation">
    <text evidence="9 13">Mono-ADP-ribosyltransferase activity of PARP3 is selectively inhibited by ME0328 compound; ME0328 does not inhibit other ARTD/PARP enzymes, such as PARP1 (PubMed:23742272). Mono-ADP-ribosyltransferase is strongly inhibited by KU0058948 compound (PubMed:19354255).</text>
</comment>
<comment type="biophysicochemical properties">
    <kinetics>
        <KM evidence="10">130 uM for NAD(+)</KM>
    </kinetics>
</comment>
<comment type="subunit">
    <text evidence="8 10 14">Interacts with PARP1; leading to activate PARP1 in absence of DNA (PubMed:16924674, PubMed:20064938). Interacts with PRKDC (PubMed:16924674). Interacts with XRCC5/Ku80; the interaction is dependent on nucleic acids (PubMed:16924674, PubMed:24598253). Interacts with XRCC6/Ku70; the interaction is dependent on nucleic acids (PubMed:16924674, PubMed:24598253). Interacts with EZH2, HDAC1, HDAC2, SUZ12, YY1, LRIG3 and LIG4 (PubMed:16924674).</text>
</comment>
<comment type="interaction">
    <interactant intactId="EBI-14609301">
        <id>Q9Y6F1-2</id>
    </interactant>
    <interactant intactId="EBI-16439278">
        <id>Q6FHY5</id>
        <label>MEOX2</label>
    </interactant>
    <organismsDiffer>false</organismsDiffer>
    <experiments>3</experiments>
</comment>
<comment type="subcellular location">
    <subcellularLocation>
        <location evidence="8">Nucleus</location>
    </subcellularLocation>
    <subcellularLocation>
        <location evidence="12 16 17">Chromosome</location>
    </subcellularLocation>
    <subcellularLocation>
        <location evidence="7">Cytoplasm</location>
        <location evidence="7">Cytoskeleton</location>
        <location evidence="7">Microtubule organizing center</location>
        <location evidence="7">Centrosome</location>
    </subcellularLocation>
    <subcellularLocation>
        <location evidence="7">Cytoplasm</location>
        <location evidence="7">Cytoskeleton</location>
        <location evidence="7">Microtubule organizing center</location>
        <location evidence="7">Centrosome</location>
        <location evidence="7">Centriole</location>
    </subcellularLocation>
    <text evidence="7 8 12 16 17">Almost exclusively localized in the nucleus and appears in numerous small foci and a small number of larger foci whereas a centrosomal location has not been detected (PubMed:16924674). In response to DNA damage, localizes to sites of double-strand break (PubMed:21270334, PubMed:28447610). Also localizes to single-strand breaks (PubMed:27530147). Preferentially localized to the daughter centriole (PubMed:10329013).</text>
</comment>
<comment type="alternative products">
    <event type="alternative splicing"/>
    <isoform>
        <id>Q9Y6F1-1</id>
        <name>1</name>
        <name>Short</name>
        <sequence type="displayed"/>
    </isoform>
    <isoform>
        <id>Q9Y6F1-2</id>
        <name>2</name>
        <name>Long</name>
        <sequence type="described" ref="VSP_007863"/>
    </isoform>
</comment>
<comment type="tissue specificity">
    <text evidence="7">Widely expressed; the highest levels are in the kidney, skeletal muscle, liver, heart and spleen; also detected in pancreas, lung, placenta, brain, leukocytes, colon, small intestine, ovary, testis, prostate and thymus.</text>
</comment>
<comment type="PTM">
    <text evidence="10 15">Auto-mono-ADP-ribosylated.</text>
</comment>
<comment type="miscellaneous">
    <molecule>Isoform 1</molecule>
    <text evidence="8">Most abundant isoform.</text>
</comment>
<comment type="similarity">
    <text evidence="24">Belongs to the ARTD/PARP family.</text>
</comment>
<gene>
    <name evidence="20 25" type="primary">PARP3</name>
    <name evidence="22" type="synonym">ADPRT3</name>
    <name type="synonym">ADPRTL3</name>
</gene>
<proteinExistence type="evidence at protein level"/>